<protein>
    <recommendedName>
        <fullName evidence="1">Glutamate--tRNA ligase 2</fullName>
        <ecNumber evidence="1">6.1.1.17</ecNumber>
    </recommendedName>
    <alternativeName>
        <fullName evidence="1">Glutamyl-tRNA synthetase 2</fullName>
        <shortName evidence="1">GluRS 2</shortName>
    </alternativeName>
</protein>
<feature type="chain" id="PRO_0000367684" description="Glutamate--tRNA ligase 2">
    <location>
        <begin position="1"/>
        <end position="439"/>
    </location>
</feature>
<feature type="short sequence motif" description="'HIGH' region" evidence="1">
    <location>
        <begin position="6"/>
        <end position="16"/>
    </location>
</feature>
<feature type="short sequence motif" description="'KMSKS' region" evidence="1">
    <location>
        <begin position="232"/>
        <end position="236"/>
    </location>
</feature>
<feature type="binding site" evidence="1">
    <location>
        <position position="235"/>
    </location>
    <ligand>
        <name>ATP</name>
        <dbReference type="ChEBI" id="CHEBI:30616"/>
    </ligand>
</feature>
<sequence length="439" mass="51177">MLRFAPSPTGDMHIGNLRAAIFNYIVAKQQHKPFLIRIEDTDKERNIEGKDQEILEILKFMGISWDKLVYQSHNIDYHREMAEKLLKENKAFYCYASTEFLEREKEKAKNEKRPFRYLDEWATLEKDKHHAPVVRLKAPNHAVSFNDAIKKEVKFEPDELDSFVLLRQDKSPTYNFACTCDDLLYEVSLIIRGEDHVSNTPKQILIQQALGSNDPIVYAHLPIILDEVSGKKMSKRDEASSVKWLLNQGFLPVAIANYLITIGNKVPKEVFSLDEAIEWFSLENLSNSPAHFNLKYLKHLNHEHLKLLDDEKLLKLTSIKDKNLLGLLRLFIEECGTLLELKEKISLFLEPKDIVKTYENEDFKERCLALFNALKSMDFQVYKDFESFKKEAMRLSQLKGKDFFKPLRILLTGNSHGVELPLIFPYIQSHYQEVLRLKA</sequence>
<reference key="1">
    <citation type="journal article" date="2006" name="Proc. Natl. Acad. Sci. U.S.A.">
        <title>The complete genome sequence of a chronic atrophic gastritis Helicobacter pylori strain: evolution during disease progression.</title>
        <authorList>
            <person name="Oh J.D."/>
            <person name="Kling-Baeckhed H."/>
            <person name="Giannakis M."/>
            <person name="Xu J."/>
            <person name="Fulton R.S."/>
            <person name="Fulton L.A."/>
            <person name="Cordum H.S."/>
            <person name="Wang C."/>
            <person name="Elliott G."/>
            <person name="Edwards J."/>
            <person name="Mardis E.R."/>
            <person name="Engstrand L.G."/>
            <person name="Gordon J.I."/>
        </authorList>
    </citation>
    <scope>NUCLEOTIDE SEQUENCE [LARGE SCALE GENOMIC DNA]</scope>
    <source>
        <strain>HPAG1</strain>
    </source>
</reference>
<organism>
    <name type="scientific">Helicobacter pylori (strain HPAG1)</name>
    <dbReference type="NCBI Taxonomy" id="357544"/>
    <lineage>
        <taxon>Bacteria</taxon>
        <taxon>Pseudomonadati</taxon>
        <taxon>Campylobacterota</taxon>
        <taxon>Epsilonproteobacteria</taxon>
        <taxon>Campylobacterales</taxon>
        <taxon>Helicobacteraceae</taxon>
        <taxon>Helicobacter</taxon>
    </lineage>
</organism>
<evidence type="ECO:0000255" key="1">
    <source>
        <dbReference type="HAMAP-Rule" id="MF_00022"/>
    </source>
</evidence>
<comment type="function">
    <text evidence="1">Catalyzes the attachment of glutamate to tRNA(Glu) in a two-step reaction: glutamate is first activated by ATP to form Glu-AMP and then transferred to the acceptor end of tRNA(Glu).</text>
</comment>
<comment type="catalytic activity">
    <reaction evidence="1">
        <text>tRNA(Glu) + L-glutamate + ATP = L-glutamyl-tRNA(Glu) + AMP + diphosphate</text>
        <dbReference type="Rhea" id="RHEA:23540"/>
        <dbReference type="Rhea" id="RHEA-COMP:9663"/>
        <dbReference type="Rhea" id="RHEA-COMP:9680"/>
        <dbReference type="ChEBI" id="CHEBI:29985"/>
        <dbReference type="ChEBI" id="CHEBI:30616"/>
        <dbReference type="ChEBI" id="CHEBI:33019"/>
        <dbReference type="ChEBI" id="CHEBI:78442"/>
        <dbReference type="ChEBI" id="CHEBI:78520"/>
        <dbReference type="ChEBI" id="CHEBI:456215"/>
        <dbReference type="EC" id="6.1.1.17"/>
    </reaction>
</comment>
<comment type="subunit">
    <text evidence="1">Monomer.</text>
</comment>
<comment type="subcellular location">
    <subcellularLocation>
        <location evidence="1">Cytoplasm</location>
    </subcellularLocation>
</comment>
<comment type="similarity">
    <text evidence="1">Belongs to the class-I aminoacyl-tRNA synthetase family. Glutamate--tRNA ligase type 1 subfamily.</text>
</comment>
<proteinExistence type="inferred from homology"/>
<accession>Q1CTM7</accession>
<dbReference type="EC" id="6.1.1.17" evidence="1"/>
<dbReference type="EMBL" id="CP000241">
    <property type="protein sequence ID" value="ABF84695.1"/>
    <property type="molecule type" value="Genomic_DNA"/>
</dbReference>
<dbReference type="RefSeq" id="WP_000943194.1">
    <property type="nucleotide sequence ID" value="NC_008086.1"/>
</dbReference>
<dbReference type="SMR" id="Q1CTM7"/>
<dbReference type="KEGG" id="hpa:HPAG1_0628"/>
<dbReference type="HOGENOM" id="CLU_015768_6_0_7"/>
<dbReference type="GO" id="GO:0005829">
    <property type="term" value="C:cytosol"/>
    <property type="evidence" value="ECO:0007669"/>
    <property type="project" value="TreeGrafter"/>
</dbReference>
<dbReference type="GO" id="GO:0005524">
    <property type="term" value="F:ATP binding"/>
    <property type="evidence" value="ECO:0007669"/>
    <property type="project" value="UniProtKB-UniRule"/>
</dbReference>
<dbReference type="GO" id="GO:0004818">
    <property type="term" value="F:glutamate-tRNA ligase activity"/>
    <property type="evidence" value="ECO:0007669"/>
    <property type="project" value="UniProtKB-UniRule"/>
</dbReference>
<dbReference type="GO" id="GO:0000049">
    <property type="term" value="F:tRNA binding"/>
    <property type="evidence" value="ECO:0007669"/>
    <property type="project" value="InterPro"/>
</dbReference>
<dbReference type="GO" id="GO:0006424">
    <property type="term" value="P:glutamyl-tRNA aminoacylation"/>
    <property type="evidence" value="ECO:0007669"/>
    <property type="project" value="UniProtKB-UniRule"/>
</dbReference>
<dbReference type="FunFam" id="3.40.50.620:FF:000007">
    <property type="entry name" value="Glutamate--tRNA ligase"/>
    <property type="match status" value="1"/>
</dbReference>
<dbReference type="Gene3D" id="1.10.10.350">
    <property type="match status" value="1"/>
</dbReference>
<dbReference type="Gene3D" id="3.40.50.620">
    <property type="entry name" value="HUPs"/>
    <property type="match status" value="1"/>
</dbReference>
<dbReference type="HAMAP" id="MF_00022">
    <property type="entry name" value="Glu_tRNA_synth_type1"/>
    <property type="match status" value="1"/>
</dbReference>
<dbReference type="InterPro" id="IPR045462">
    <property type="entry name" value="aa-tRNA-synth_I_cd-bd"/>
</dbReference>
<dbReference type="InterPro" id="IPR020751">
    <property type="entry name" value="aa-tRNA-synth_I_codon-bd_sub2"/>
</dbReference>
<dbReference type="InterPro" id="IPR001412">
    <property type="entry name" value="aa-tRNA-synth_I_CS"/>
</dbReference>
<dbReference type="InterPro" id="IPR008925">
    <property type="entry name" value="aa_tRNA-synth_I_cd-bd_sf"/>
</dbReference>
<dbReference type="InterPro" id="IPR004527">
    <property type="entry name" value="Glu-tRNA-ligase_bac/mito"/>
</dbReference>
<dbReference type="InterPro" id="IPR000924">
    <property type="entry name" value="Glu/Gln-tRNA-synth"/>
</dbReference>
<dbReference type="InterPro" id="IPR020058">
    <property type="entry name" value="Glu/Gln-tRNA-synth_Ib_cat-dom"/>
</dbReference>
<dbReference type="InterPro" id="IPR049940">
    <property type="entry name" value="GluQ/Sye"/>
</dbReference>
<dbReference type="InterPro" id="IPR014729">
    <property type="entry name" value="Rossmann-like_a/b/a_fold"/>
</dbReference>
<dbReference type="NCBIfam" id="TIGR00464">
    <property type="entry name" value="gltX_bact"/>
    <property type="match status" value="1"/>
</dbReference>
<dbReference type="PANTHER" id="PTHR43311">
    <property type="entry name" value="GLUTAMATE--TRNA LIGASE"/>
    <property type="match status" value="1"/>
</dbReference>
<dbReference type="PANTHER" id="PTHR43311:SF2">
    <property type="entry name" value="GLUTAMATE--TRNA LIGASE, MITOCHONDRIAL-RELATED"/>
    <property type="match status" value="1"/>
</dbReference>
<dbReference type="Pfam" id="PF19269">
    <property type="entry name" value="Anticodon_2"/>
    <property type="match status" value="1"/>
</dbReference>
<dbReference type="Pfam" id="PF00749">
    <property type="entry name" value="tRNA-synt_1c"/>
    <property type="match status" value="1"/>
</dbReference>
<dbReference type="PRINTS" id="PR00987">
    <property type="entry name" value="TRNASYNTHGLU"/>
</dbReference>
<dbReference type="SUPFAM" id="SSF48163">
    <property type="entry name" value="An anticodon-binding domain of class I aminoacyl-tRNA synthetases"/>
    <property type="match status" value="1"/>
</dbReference>
<dbReference type="SUPFAM" id="SSF52374">
    <property type="entry name" value="Nucleotidylyl transferase"/>
    <property type="match status" value="1"/>
</dbReference>
<dbReference type="PROSITE" id="PS00178">
    <property type="entry name" value="AA_TRNA_LIGASE_I"/>
    <property type="match status" value="1"/>
</dbReference>
<keyword id="KW-0030">Aminoacyl-tRNA synthetase</keyword>
<keyword id="KW-0067">ATP-binding</keyword>
<keyword id="KW-0963">Cytoplasm</keyword>
<keyword id="KW-0436">Ligase</keyword>
<keyword id="KW-0547">Nucleotide-binding</keyword>
<keyword id="KW-0648">Protein biosynthesis</keyword>
<gene>
    <name evidence="1" type="primary">gltX2</name>
    <name type="ordered locus">HPAG1_0628</name>
</gene>
<name>SYE2_HELPH</name>